<comment type="function">
    <text evidence="1">Catalyzes the condensation of the acetyl group of acetyl-CoA with 3-methyl-2-oxobutanoate (2-ketoisovalerate) to form 3-carboxy-3-hydroxy-4-methylpentanoate (2-isopropylmalate).</text>
</comment>
<comment type="catalytic activity">
    <reaction evidence="1">
        <text>3-methyl-2-oxobutanoate + acetyl-CoA + H2O = (2S)-2-isopropylmalate + CoA + H(+)</text>
        <dbReference type="Rhea" id="RHEA:21524"/>
        <dbReference type="ChEBI" id="CHEBI:1178"/>
        <dbReference type="ChEBI" id="CHEBI:11851"/>
        <dbReference type="ChEBI" id="CHEBI:15377"/>
        <dbReference type="ChEBI" id="CHEBI:15378"/>
        <dbReference type="ChEBI" id="CHEBI:57287"/>
        <dbReference type="ChEBI" id="CHEBI:57288"/>
        <dbReference type="EC" id="2.3.3.13"/>
    </reaction>
</comment>
<comment type="cofactor">
    <cofactor evidence="1">
        <name>Mn(2+)</name>
        <dbReference type="ChEBI" id="CHEBI:29035"/>
    </cofactor>
</comment>
<comment type="pathway">
    <text evidence="1">Amino-acid biosynthesis; L-leucine biosynthesis; L-leucine from 3-methyl-2-oxobutanoate: step 1/4.</text>
</comment>
<comment type="subunit">
    <text evidence="1">Homodimer.</text>
</comment>
<comment type="subcellular location">
    <subcellularLocation>
        <location evidence="1">Cytoplasm</location>
    </subcellularLocation>
</comment>
<comment type="similarity">
    <text evidence="4">Belongs to the alpha-IPM synthase/homocitrate synthase family. LeuA type 1 subfamily.</text>
</comment>
<sequence>MAFKKDKPVYIVDTTLRDGEQTAGVVFANNEKIRIAQMLDEIGIDQLEVGIPTMGGDEKETVAKIAKLGLKASIMAWNRAVVKDVQESLECGVDAVAISISTSDIHIEHKLKKTRQWVLDSMTEAVRFAKKEGVYVSVNAEDASRTDMNFLIEFARCAKQAGADRLRFCDTVGFLDPFKTYEMVKAIKDAVDIEIEMHTHNDFGMATANALAGVKAGAKFVGVTVNGLGERAGNAALEEVVMALKYVYKMDLGIDTSRFREISEYVALASGRPLPPSKAIVGKNVFAHESGIHVDGALKNPYTYEVFDPQEVGLERQIVIGKHSGTAALINKFKEYGRVLTEEEANLLLPHVRKMAIQLKRPLFDKELMYLYEDVIVKGKAKAI</sequence>
<proteinExistence type="inferred from homology"/>
<protein>
    <recommendedName>
        <fullName evidence="1">2-isopropylmalate synthase 2</fullName>
        <ecNumber evidence="1">2.3.3.13</ecNumber>
    </recommendedName>
    <alternativeName>
        <fullName evidence="1">Alpha-IPM synthase 2</fullName>
    </alternativeName>
    <alternativeName>
        <fullName evidence="1">Alpha-isopropylmalate synthase 2</fullName>
    </alternativeName>
</protein>
<organism>
    <name type="scientific">Caldanaerobacter subterraneus subsp. tengcongensis (strain DSM 15242 / JCM 11007 / NBRC 100824 / MB4)</name>
    <name type="common">Thermoanaerobacter tengcongensis</name>
    <dbReference type="NCBI Taxonomy" id="273068"/>
    <lineage>
        <taxon>Bacteria</taxon>
        <taxon>Bacillati</taxon>
        <taxon>Bacillota</taxon>
        <taxon>Clostridia</taxon>
        <taxon>Thermoanaerobacterales</taxon>
        <taxon>Thermoanaerobacteraceae</taxon>
        <taxon>Caldanaerobacter</taxon>
    </lineage>
</organism>
<keyword id="KW-0028">Amino-acid biosynthesis</keyword>
<keyword id="KW-0100">Branched-chain amino acid biosynthesis</keyword>
<keyword id="KW-0963">Cytoplasm</keyword>
<keyword id="KW-0432">Leucine biosynthesis</keyword>
<keyword id="KW-0464">Manganese</keyword>
<keyword id="KW-0479">Metal-binding</keyword>
<keyword id="KW-1185">Reference proteome</keyword>
<keyword id="KW-0808">Transferase</keyword>
<feature type="chain" id="PRO_0000140394" description="2-isopropylmalate synthase 2">
    <location>
        <begin position="1"/>
        <end position="384"/>
    </location>
</feature>
<feature type="domain" description="Pyruvate carboxyltransferase" evidence="2">
    <location>
        <begin position="9"/>
        <end position="260"/>
    </location>
</feature>
<feature type="binding site" evidence="1">
    <location>
        <position position="18"/>
    </location>
    <ligand>
        <name>Mn(2+)</name>
        <dbReference type="ChEBI" id="CHEBI:29035"/>
    </ligand>
</feature>
<feature type="binding site" evidence="1">
    <location>
        <position position="198"/>
    </location>
    <ligand>
        <name>Mn(2+)</name>
        <dbReference type="ChEBI" id="CHEBI:29035"/>
    </ligand>
</feature>
<feature type="binding site" evidence="1">
    <location>
        <position position="200"/>
    </location>
    <ligand>
        <name>Mn(2+)</name>
        <dbReference type="ChEBI" id="CHEBI:29035"/>
    </ligand>
</feature>
<feature type="binding site" evidence="1">
    <location>
        <position position="234"/>
    </location>
    <ligand>
        <name>Mn(2+)</name>
        <dbReference type="ChEBI" id="CHEBI:29035"/>
    </ligand>
</feature>
<dbReference type="EC" id="2.3.3.13" evidence="1"/>
<dbReference type="EMBL" id="AE008691">
    <property type="protein sequence ID" value="AAM23753.1"/>
    <property type="molecule type" value="Genomic_DNA"/>
</dbReference>
<dbReference type="RefSeq" id="WP_011024905.1">
    <property type="nucleotide sequence ID" value="NC_003869.1"/>
</dbReference>
<dbReference type="SMR" id="Q8RCF9"/>
<dbReference type="STRING" id="273068.TTE0472"/>
<dbReference type="KEGG" id="tte:TTE0472"/>
<dbReference type="eggNOG" id="COG0119">
    <property type="taxonomic scope" value="Bacteria"/>
</dbReference>
<dbReference type="HOGENOM" id="CLU_022158_4_2_9"/>
<dbReference type="OrthoDB" id="9804858at2"/>
<dbReference type="UniPathway" id="UPA00048">
    <property type="reaction ID" value="UER00070"/>
</dbReference>
<dbReference type="Proteomes" id="UP000000555">
    <property type="component" value="Chromosome"/>
</dbReference>
<dbReference type="GO" id="GO:0005737">
    <property type="term" value="C:cytoplasm"/>
    <property type="evidence" value="ECO:0007669"/>
    <property type="project" value="UniProtKB-SubCell"/>
</dbReference>
<dbReference type="GO" id="GO:0003852">
    <property type="term" value="F:2-isopropylmalate synthase activity"/>
    <property type="evidence" value="ECO:0007669"/>
    <property type="project" value="UniProtKB-EC"/>
</dbReference>
<dbReference type="GO" id="GO:0046872">
    <property type="term" value="F:metal ion binding"/>
    <property type="evidence" value="ECO:0007669"/>
    <property type="project" value="UniProtKB-KW"/>
</dbReference>
<dbReference type="GO" id="GO:0009098">
    <property type="term" value="P:L-leucine biosynthetic process"/>
    <property type="evidence" value="ECO:0007669"/>
    <property type="project" value="UniProtKB-UniPathway"/>
</dbReference>
<dbReference type="CDD" id="cd07939">
    <property type="entry name" value="DRE_TIM_NifV"/>
    <property type="match status" value="1"/>
</dbReference>
<dbReference type="Gene3D" id="1.10.238.260">
    <property type="match status" value="1"/>
</dbReference>
<dbReference type="Gene3D" id="3.20.20.70">
    <property type="entry name" value="Aldolase class I"/>
    <property type="match status" value="1"/>
</dbReference>
<dbReference type="InterPro" id="IPR002034">
    <property type="entry name" value="AIPM/Hcit_synth_CS"/>
</dbReference>
<dbReference type="InterPro" id="IPR013785">
    <property type="entry name" value="Aldolase_TIM"/>
</dbReference>
<dbReference type="InterPro" id="IPR054691">
    <property type="entry name" value="LeuA/HCS_post-cat"/>
</dbReference>
<dbReference type="InterPro" id="IPR013477">
    <property type="entry name" value="NifV/FrbC"/>
</dbReference>
<dbReference type="InterPro" id="IPR000891">
    <property type="entry name" value="PYR_CT"/>
</dbReference>
<dbReference type="NCBIfam" id="TIGR02660">
    <property type="entry name" value="nifV_homocitr"/>
    <property type="match status" value="1"/>
</dbReference>
<dbReference type="PANTHER" id="PTHR42880">
    <property type="entry name" value="HOMOCITRATE SYNTHASE"/>
    <property type="match status" value="1"/>
</dbReference>
<dbReference type="PANTHER" id="PTHR42880:SF1">
    <property type="entry name" value="ISOPROPYLMALATE_HOMOCITRATE_CITRAMALATE SYNTHASE FAMILY PROTEIN"/>
    <property type="match status" value="1"/>
</dbReference>
<dbReference type="Pfam" id="PF22617">
    <property type="entry name" value="HCS_D2"/>
    <property type="match status" value="1"/>
</dbReference>
<dbReference type="Pfam" id="PF00682">
    <property type="entry name" value="HMGL-like"/>
    <property type="match status" value="1"/>
</dbReference>
<dbReference type="SUPFAM" id="SSF51569">
    <property type="entry name" value="Aldolase"/>
    <property type="match status" value="1"/>
</dbReference>
<dbReference type="PROSITE" id="PS00815">
    <property type="entry name" value="AIPM_HOMOCIT_SYNTH_1"/>
    <property type="match status" value="1"/>
</dbReference>
<dbReference type="PROSITE" id="PS00816">
    <property type="entry name" value="AIPM_HOMOCIT_SYNTH_2"/>
    <property type="match status" value="1"/>
</dbReference>
<dbReference type="PROSITE" id="PS50991">
    <property type="entry name" value="PYR_CT"/>
    <property type="match status" value="1"/>
</dbReference>
<accession>Q8RCF9</accession>
<evidence type="ECO:0000250" key="1">
    <source>
        <dbReference type="UniProtKB" id="Q9JZG1"/>
    </source>
</evidence>
<evidence type="ECO:0000255" key="2">
    <source>
        <dbReference type="PROSITE-ProRule" id="PRU01151"/>
    </source>
</evidence>
<evidence type="ECO:0000303" key="3">
    <source>
    </source>
</evidence>
<evidence type="ECO:0000305" key="4"/>
<name>LEU12_CALS4</name>
<reference key="1">
    <citation type="journal article" date="2002" name="Genome Res.">
        <title>A complete sequence of the T. tengcongensis genome.</title>
        <authorList>
            <person name="Bao Q."/>
            <person name="Tian Y."/>
            <person name="Li W."/>
            <person name="Xu Z."/>
            <person name="Xuan Z."/>
            <person name="Hu S."/>
            <person name="Dong W."/>
            <person name="Yang J."/>
            <person name="Chen Y."/>
            <person name="Xue Y."/>
            <person name="Xu Y."/>
            <person name="Lai X."/>
            <person name="Huang L."/>
            <person name="Dong X."/>
            <person name="Ma Y."/>
            <person name="Ling L."/>
            <person name="Tan H."/>
            <person name="Chen R."/>
            <person name="Wang J."/>
            <person name="Yu J."/>
            <person name="Yang H."/>
        </authorList>
    </citation>
    <scope>NUCLEOTIDE SEQUENCE [LARGE SCALE GENOMIC DNA]</scope>
    <source>
        <strain>DSM 15242 / JCM 11007 / NBRC 100824 / MB4</strain>
    </source>
</reference>
<gene>
    <name evidence="3" type="primary">leuA2</name>
    <name type="ordered locus">TTE0472</name>
</gene>